<reference key="1">
    <citation type="journal article" date="1999" name="Nature">
        <title>Sequence and analysis of chromosome 2 of the plant Arabidopsis thaliana.</title>
        <authorList>
            <person name="Lin X."/>
            <person name="Kaul S."/>
            <person name="Rounsley S.D."/>
            <person name="Shea T.P."/>
            <person name="Benito M.-I."/>
            <person name="Town C.D."/>
            <person name="Fujii C.Y."/>
            <person name="Mason T.M."/>
            <person name="Bowman C.L."/>
            <person name="Barnstead M.E."/>
            <person name="Feldblyum T.V."/>
            <person name="Buell C.R."/>
            <person name="Ketchum K.A."/>
            <person name="Lee J.J."/>
            <person name="Ronning C.M."/>
            <person name="Koo H.L."/>
            <person name="Moffat K.S."/>
            <person name="Cronin L.A."/>
            <person name="Shen M."/>
            <person name="Pai G."/>
            <person name="Van Aken S."/>
            <person name="Umayam L."/>
            <person name="Tallon L.J."/>
            <person name="Gill J.E."/>
            <person name="Adams M.D."/>
            <person name="Carrera A.J."/>
            <person name="Creasy T.H."/>
            <person name="Goodman H.M."/>
            <person name="Somerville C.R."/>
            <person name="Copenhaver G.P."/>
            <person name="Preuss D."/>
            <person name="Nierman W.C."/>
            <person name="White O."/>
            <person name="Eisen J.A."/>
            <person name="Salzberg S.L."/>
            <person name="Fraser C.M."/>
            <person name="Venter J.C."/>
        </authorList>
    </citation>
    <scope>NUCLEOTIDE SEQUENCE [LARGE SCALE GENOMIC DNA]</scope>
    <source>
        <strain>cv. Columbia</strain>
    </source>
</reference>
<reference key="2">
    <citation type="journal article" date="2017" name="Plant J.">
        <title>Araport11: a complete reannotation of the Arabidopsis thaliana reference genome.</title>
        <authorList>
            <person name="Cheng C.Y."/>
            <person name="Krishnakumar V."/>
            <person name="Chan A.P."/>
            <person name="Thibaud-Nissen F."/>
            <person name="Schobel S."/>
            <person name="Town C.D."/>
        </authorList>
    </citation>
    <scope>GENOME REANNOTATION</scope>
    <source>
        <strain>cv. Columbia</strain>
    </source>
</reference>
<reference key="3">
    <citation type="journal article" date="2005" name="Plant Cell">
        <title>Characterization of an Arabidopsis enzyme family that conjugates amino acids to indole-3-acetic acid.</title>
        <authorList>
            <person name="Staswick P.E."/>
            <person name="Serban B."/>
            <person name="Rowe M."/>
            <person name="Tiryaki I."/>
            <person name="Maldonado M.T."/>
            <person name="Maldonado M.C."/>
            <person name="Suza W."/>
        </authorList>
    </citation>
    <scope>FUNCTION</scope>
    <scope>INDUCTION</scope>
</reference>
<reference key="4">
    <citation type="journal article" date="2002" name="Plant Mol. Biol.">
        <title>Auxin-responsive gene expression: genes, promoters and regulatory factors.</title>
        <authorList>
            <person name="Hagen G."/>
            <person name="Guilfoyle T.J."/>
        </authorList>
    </citation>
    <scope>NOMENCLATURE</scope>
</reference>
<organism>
    <name type="scientific">Arabidopsis thaliana</name>
    <name type="common">Mouse-ear cress</name>
    <dbReference type="NCBI Taxonomy" id="3702"/>
    <lineage>
        <taxon>Eukaryota</taxon>
        <taxon>Viridiplantae</taxon>
        <taxon>Streptophyta</taxon>
        <taxon>Embryophyta</taxon>
        <taxon>Tracheophyta</taxon>
        <taxon>Spermatophyta</taxon>
        <taxon>Magnoliopsida</taxon>
        <taxon>eudicotyledons</taxon>
        <taxon>Gunneridae</taxon>
        <taxon>Pentapetalae</taxon>
        <taxon>rosids</taxon>
        <taxon>malvids</taxon>
        <taxon>Brassicales</taxon>
        <taxon>Brassicaceae</taxon>
        <taxon>Camelineae</taxon>
        <taxon>Arabidopsis</taxon>
    </lineage>
</organism>
<gene>
    <name type="primary">GH3.1</name>
    <name type="ordered locus">At2g14960</name>
    <name type="ORF">T26I20.12</name>
</gene>
<protein>
    <recommendedName>
        <fullName>Probable indole-3-acetic acid-amido synthetase GH3.1</fullName>
        <ecNumber>6.3.2.-</ecNumber>
    </recommendedName>
    <alternativeName>
        <fullName>Auxin-responsive GH3-like protein 1</fullName>
        <shortName>AtGH3-1</shortName>
    </alternativeName>
</protein>
<keyword id="KW-0436">Ligase</keyword>
<keyword id="KW-1185">Reference proteome</keyword>
<name>GH31_ARATH</name>
<accession>O82333</accession>
<sequence>MAVDSNLSSPLGPPACEKDAKALRFIEEMTRNADTVQENLLAEILARNADTEYLRRFNLCGATDRDTFKTKIPVITYEDLQPEIQRIADGDRSPILSAHPISEFLTSSGTSAGERKLMPTIKEELDRRQLLYSLLMPVMNLYVPGLDKGKGMYFLFVKSETKTPGGLPARPVLTSYYKSEHFRSRPYDPYNVYTSPNEAILCPDSFQSMYTQMLCGLLDRLSVLRVGAVFASGLLRAIRFLQLHWSRFAHDIELGCLDSEITDPSIRQCMSGILKPDPVLAEFIRRECKSDNWEKIITRIWPNTKYLDVIVTGAMAQYIPTLEYYSGGLPMACTMYASSECYFGLNLNPMSKPSEVSYTIMPNMAYFEFIPLGGTKAVELVDVNIGKEYELVVTTYAGLCRYRVGDILRVTGFHNSAPQFHFVRRKNVLLSIDSDKTDESELQKAVENASSILHEECGSRVAEYTSYADTSTIPGHYVLYWELLVRDGARQPSHETLTRCCLGMEESLNSVYRQSRVADNSVGPLEIRVVRNGTFEELMDYAISRGASINQYKVPRCVNFTPIVELLDSRVVSAHFSPSLPHWTPERRRR</sequence>
<evidence type="ECO:0000269" key="1">
    <source>
    </source>
</evidence>
<evidence type="ECO:0000305" key="2"/>
<dbReference type="EC" id="6.3.2.-"/>
<dbReference type="EMBL" id="AC005396">
    <property type="protein sequence ID" value="AAC61292.1"/>
    <property type="molecule type" value="Genomic_DNA"/>
</dbReference>
<dbReference type="EMBL" id="CP002685">
    <property type="protein sequence ID" value="AEC06353.1"/>
    <property type="molecule type" value="Genomic_DNA"/>
</dbReference>
<dbReference type="PIR" id="D84523">
    <property type="entry name" value="D84523"/>
</dbReference>
<dbReference type="RefSeq" id="NP_179101.1">
    <property type="nucleotide sequence ID" value="NM_127059.3"/>
</dbReference>
<dbReference type="SMR" id="O82333"/>
<dbReference type="FunCoup" id="O82333">
    <property type="interactions" value="1216"/>
</dbReference>
<dbReference type="STRING" id="3702.O82333"/>
<dbReference type="PaxDb" id="3702-AT2G14960.1"/>
<dbReference type="ProteomicsDB" id="224791"/>
<dbReference type="EnsemblPlants" id="AT2G14960.1">
    <property type="protein sequence ID" value="AT2G14960.1"/>
    <property type="gene ID" value="AT2G14960"/>
</dbReference>
<dbReference type="GeneID" id="815985"/>
<dbReference type="Gramene" id="AT2G14960.1">
    <property type="protein sequence ID" value="AT2G14960.1"/>
    <property type="gene ID" value="AT2G14960"/>
</dbReference>
<dbReference type="KEGG" id="ath:AT2G14960"/>
<dbReference type="Araport" id="AT2G14960"/>
<dbReference type="TAIR" id="AT2G14960">
    <property type="gene designation" value="GH3.1"/>
</dbReference>
<dbReference type="eggNOG" id="ENOG502QPMW">
    <property type="taxonomic scope" value="Eukaryota"/>
</dbReference>
<dbReference type="HOGENOM" id="CLU_016249_2_1_1"/>
<dbReference type="InParanoid" id="O82333"/>
<dbReference type="OMA" id="EGFFAIQ"/>
<dbReference type="PhylomeDB" id="O82333"/>
<dbReference type="SABIO-RK" id="O82333"/>
<dbReference type="CD-CODE" id="4299E36E">
    <property type="entry name" value="Nucleolus"/>
</dbReference>
<dbReference type="PRO" id="PR:O82333"/>
<dbReference type="Proteomes" id="UP000006548">
    <property type="component" value="Chromosome 2"/>
</dbReference>
<dbReference type="ExpressionAtlas" id="O82333">
    <property type="expression patterns" value="baseline and differential"/>
</dbReference>
<dbReference type="GO" id="GO:0016874">
    <property type="term" value="F:ligase activity"/>
    <property type="evidence" value="ECO:0007669"/>
    <property type="project" value="UniProtKB-KW"/>
</dbReference>
<dbReference type="GO" id="GO:0009733">
    <property type="term" value="P:response to auxin"/>
    <property type="evidence" value="ECO:0000315"/>
    <property type="project" value="TAIR"/>
</dbReference>
<dbReference type="InterPro" id="IPR004993">
    <property type="entry name" value="GH3"/>
</dbReference>
<dbReference type="InterPro" id="IPR055378">
    <property type="entry name" value="GH3_C"/>
</dbReference>
<dbReference type="InterPro" id="IPR055377">
    <property type="entry name" value="GH3_M"/>
</dbReference>
<dbReference type="PANTHER" id="PTHR31901">
    <property type="entry name" value="GH3 DOMAIN-CONTAINING PROTEIN"/>
    <property type="match status" value="1"/>
</dbReference>
<dbReference type="PANTHER" id="PTHR31901:SF96">
    <property type="entry name" value="INDOLE-3-ACETIC ACID-AMIDO SYNTHETASE GH3.1-RELATED"/>
    <property type="match status" value="1"/>
</dbReference>
<dbReference type="Pfam" id="PF03321">
    <property type="entry name" value="GH3"/>
    <property type="match status" value="1"/>
</dbReference>
<dbReference type="Pfam" id="PF23572">
    <property type="entry name" value="GH3_C"/>
    <property type="match status" value="1"/>
</dbReference>
<dbReference type="Pfam" id="PF23571">
    <property type="entry name" value="GH3_M"/>
    <property type="match status" value="1"/>
</dbReference>
<feature type="chain" id="PRO_0000203570" description="Probable indole-3-acetic acid-amido synthetase GH3.1">
    <location>
        <begin position="1"/>
        <end position="590"/>
    </location>
</feature>
<comment type="function">
    <text evidence="1">Catalyzes the synthesis of indole-3-acetic acid (IAA)-amino acid conjugates, providing a mechanism for the plant to cope with the presence of excess auxin.</text>
</comment>
<comment type="induction">
    <text evidence="1">By auxin.</text>
</comment>
<comment type="similarity">
    <text evidence="2">Belongs to the IAA-amido conjugating enzyme family.</text>
</comment>
<proteinExistence type="evidence at transcript level"/>